<accession>Q1RKI0</accession>
<proteinExistence type="inferred from homology"/>
<feature type="chain" id="PRO_0000277900" description="Transcription elongation factor GreA">
    <location>
        <begin position="1"/>
        <end position="162"/>
    </location>
</feature>
<feature type="coiled-coil region" evidence="1">
    <location>
        <begin position="44"/>
        <end position="69"/>
    </location>
</feature>
<sequence length="162" mass="18115">MMAKFPITDQGFEKLEHELKHLKHVERKKVSEDIAEARAHGDLSENAEYEAAREKQAFVEARIKHLEDITARAEIINVAKLSGDSIKFGATVVLIDDETEEEVMYHIVGEYEADITKKRVSIASPIAKALIGKSVGDIVEVMTPGGVKSYEVVTIKYEELVF</sequence>
<comment type="function">
    <text evidence="1">Necessary for efficient RNA polymerase transcription elongation past template-encoded arresting sites. The arresting sites in DNA have the property of trapping a certain fraction of elongating RNA polymerases that pass through, resulting in locked ternary complexes. Cleavage of the nascent transcript by cleavage factors such as GreA or GreB allows the resumption of elongation from the new 3'terminus. GreA releases sequences of 2 to 3 nucleotides.</text>
</comment>
<comment type="similarity">
    <text evidence="1">Belongs to the GreA/GreB family.</text>
</comment>
<name>GREA_RICBR</name>
<keyword id="KW-0175">Coiled coil</keyword>
<keyword id="KW-0238">DNA-binding</keyword>
<keyword id="KW-0804">Transcription</keyword>
<keyword id="KW-0805">Transcription regulation</keyword>
<reference key="1">
    <citation type="journal article" date="2006" name="PLoS Genet.">
        <title>Genome sequence of Rickettsia bellii illuminates the role of amoebae in gene exchanges between intracellular pathogens.</title>
        <authorList>
            <person name="Ogata H."/>
            <person name="La Scola B."/>
            <person name="Audic S."/>
            <person name="Renesto P."/>
            <person name="Blanc G."/>
            <person name="Robert C."/>
            <person name="Fournier P.-E."/>
            <person name="Claverie J.-M."/>
            <person name="Raoult D."/>
        </authorList>
    </citation>
    <scope>NUCLEOTIDE SEQUENCE [LARGE SCALE GENOMIC DNA]</scope>
    <source>
        <strain>RML369-C</strain>
    </source>
</reference>
<evidence type="ECO:0000255" key="1">
    <source>
        <dbReference type="HAMAP-Rule" id="MF_00105"/>
    </source>
</evidence>
<gene>
    <name evidence="1" type="primary">greA</name>
    <name type="ordered locus">RBE_0053</name>
</gene>
<dbReference type="EMBL" id="CP000087">
    <property type="protein sequence ID" value="ABE04134.1"/>
    <property type="molecule type" value="Genomic_DNA"/>
</dbReference>
<dbReference type="RefSeq" id="WP_011476749.1">
    <property type="nucleotide sequence ID" value="NC_007940.1"/>
</dbReference>
<dbReference type="SMR" id="Q1RKI0"/>
<dbReference type="KEGG" id="rbe:RBE_0053"/>
<dbReference type="eggNOG" id="COG0782">
    <property type="taxonomic scope" value="Bacteria"/>
</dbReference>
<dbReference type="HOGENOM" id="CLU_101379_2_0_5"/>
<dbReference type="OrthoDB" id="9808774at2"/>
<dbReference type="Proteomes" id="UP000001951">
    <property type="component" value="Chromosome"/>
</dbReference>
<dbReference type="GO" id="GO:0003677">
    <property type="term" value="F:DNA binding"/>
    <property type="evidence" value="ECO:0007669"/>
    <property type="project" value="UniProtKB-UniRule"/>
</dbReference>
<dbReference type="GO" id="GO:0070063">
    <property type="term" value="F:RNA polymerase binding"/>
    <property type="evidence" value="ECO:0007669"/>
    <property type="project" value="InterPro"/>
</dbReference>
<dbReference type="GO" id="GO:0006354">
    <property type="term" value="P:DNA-templated transcription elongation"/>
    <property type="evidence" value="ECO:0007669"/>
    <property type="project" value="TreeGrafter"/>
</dbReference>
<dbReference type="GO" id="GO:0032784">
    <property type="term" value="P:regulation of DNA-templated transcription elongation"/>
    <property type="evidence" value="ECO:0007669"/>
    <property type="project" value="UniProtKB-UniRule"/>
</dbReference>
<dbReference type="FunFam" id="1.10.287.180:FF:000001">
    <property type="entry name" value="Transcription elongation factor GreA"/>
    <property type="match status" value="1"/>
</dbReference>
<dbReference type="FunFam" id="3.10.50.30:FF:000001">
    <property type="entry name" value="Transcription elongation factor GreA"/>
    <property type="match status" value="1"/>
</dbReference>
<dbReference type="Gene3D" id="3.10.50.30">
    <property type="entry name" value="Transcription elongation factor, GreA/GreB, C-terminal domain"/>
    <property type="match status" value="1"/>
</dbReference>
<dbReference type="Gene3D" id="1.10.287.180">
    <property type="entry name" value="Transcription elongation factor, GreA/GreB, N-terminal domain"/>
    <property type="match status" value="1"/>
</dbReference>
<dbReference type="HAMAP" id="MF_00105">
    <property type="entry name" value="GreA_GreB"/>
    <property type="match status" value="1"/>
</dbReference>
<dbReference type="InterPro" id="IPR036953">
    <property type="entry name" value="GreA/GreB_C_sf"/>
</dbReference>
<dbReference type="InterPro" id="IPR018151">
    <property type="entry name" value="TF_GreA/GreB_CS"/>
</dbReference>
<dbReference type="InterPro" id="IPR006359">
    <property type="entry name" value="Tscrpt_elong_fac_GreA"/>
</dbReference>
<dbReference type="InterPro" id="IPR028624">
    <property type="entry name" value="Tscrpt_elong_fac_GreA/B"/>
</dbReference>
<dbReference type="InterPro" id="IPR001437">
    <property type="entry name" value="Tscrpt_elong_fac_GreA/B_C"/>
</dbReference>
<dbReference type="InterPro" id="IPR023459">
    <property type="entry name" value="Tscrpt_elong_fac_GreA/B_fam"/>
</dbReference>
<dbReference type="InterPro" id="IPR022691">
    <property type="entry name" value="Tscrpt_elong_fac_GreA/B_N"/>
</dbReference>
<dbReference type="InterPro" id="IPR036805">
    <property type="entry name" value="Tscrpt_elong_fac_GreA/B_N_sf"/>
</dbReference>
<dbReference type="NCBIfam" id="TIGR01462">
    <property type="entry name" value="greA"/>
    <property type="match status" value="1"/>
</dbReference>
<dbReference type="NCBIfam" id="NF001261">
    <property type="entry name" value="PRK00226.1-2"/>
    <property type="match status" value="1"/>
</dbReference>
<dbReference type="NCBIfam" id="NF001263">
    <property type="entry name" value="PRK00226.1-4"/>
    <property type="match status" value="1"/>
</dbReference>
<dbReference type="NCBIfam" id="NF001264">
    <property type="entry name" value="PRK00226.1-5"/>
    <property type="match status" value="1"/>
</dbReference>
<dbReference type="PANTHER" id="PTHR30437">
    <property type="entry name" value="TRANSCRIPTION ELONGATION FACTOR GREA"/>
    <property type="match status" value="1"/>
</dbReference>
<dbReference type="PANTHER" id="PTHR30437:SF4">
    <property type="entry name" value="TRANSCRIPTION ELONGATION FACTOR GREA"/>
    <property type="match status" value="1"/>
</dbReference>
<dbReference type="Pfam" id="PF01272">
    <property type="entry name" value="GreA_GreB"/>
    <property type="match status" value="1"/>
</dbReference>
<dbReference type="Pfam" id="PF03449">
    <property type="entry name" value="GreA_GreB_N"/>
    <property type="match status" value="1"/>
</dbReference>
<dbReference type="PIRSF" id="PIRSF006092">
    <property type="entry name" value="GreA_GreB"/>
    <property type="match status" value="1"/>
</dbReference>
<dbReference type="SUPFAM" id="SSF54534">
    <property type="entry name" value="FKBP-like"/>
    <property type="match status" value="1"/>
</dbReference>
<dbReference type="SUPFAM" id="SSF46557">
    <property type="entry name" value="GreA transcript cleavage protein, N-terminal domain"/>
    <property type="match status" value="1"/>
</dbReference>
<dbReference type="PROSITE" id="PS00829">
    <property type="entry name" value="GREAB_1"/>
    <property type="match status" value="1"/>
</dbReference>
<dbReference type="PROSITE" id="PS00830">
    <property type="entry name" value="GREAB_2"/>
    <property type="match status" value="1"/>
</dbReference>
<protein>
    <recommendedName>
        <fullName evidence="1">Transcription elongation factor GreA</fullName>
    </recommendedName>
    <alternativeName>
        <fullName evidence="1">Transcript cleavage factor GreA</fullName>
    </alternativeName>
</protein>
<organism>
    <name type="scientific">Rickettsia bellii (strain RML369-C)</name>
    <dbReference type="NCBI Taxonomy" id="336407"/>
    <lineage>
        <taxon>Bacteria</taxon>
        <taxon>Pseudomonadati</taxon>
        <taxon>Pseudomonadota</taxon>
        <taxon>Alphaproteobacteria</taxon>
        <taxon>Rickettsiales</taxon>
        <taxon>Rickettsiaceae</taxon>
        <taxon>Rickettsieae</taxon>
        <taxon>Rickettsia</taxon>
        <taxon>belli group</taxon>
    </lineage>
</organism>